<feature type="chain" id="PRO_0000430676" description="O-antigen chain terminator bifunctional methyltransferase/kinase WbdD">
    <location>
        <begin position="1"/>
        <end position="708"/>
    </location>
</feature>
<feature type="region of interest" description="Methyltransferase" evidence="9 10">
    <location>
        <begin position="1"/>
        <end position="210"/>
    </location>
</feature>
<feature type="region of interest" description="Kinase" evidence="9 10">
    <location>
        <begin position="211"/>
        <end position="459"/>
    </location>
</feature>
<feature type="region of interest" description="Required for membrane-binding" evidence="3">
    <location>
        <begin position="601"/>
        <end position="669"/>
    </location>
</feature>
<feature type="region of interest" description="Required for localizing WbdA to the membrane" evidence="3">
    <location>
        <begin position="687"/>
        <end position="708"/>
    </location>
</feature>
<feature type="coiled-coil region" evidence="1">
    <location>
        <begin position="485"/>
        <end position="594"/>
    </location>
</feature>
<feature type="binding site" evidence="5 6">
    <location>
        <begin position="16"/>
        <end position="17"/>
    </location>
    <ligand>
        <name>S-adenosyl-L-methionine</name>
        <dbReference type="ChEBI" id="CHEBI:59789"/>
    </ligand>
</feature>
<feature type="binding site" evidence="5 6">
    <location>
        <position position="36"/>
    </location>
    <ligand>
        <name>S-adenosyl-L-methionine</name>
        <dbReference type="ChEBI" id="CHEBI:59789"/>
    </ligand>
</feature>
<feature type="binding site" evidence="5 6">
    <location>
        <position position="61"/>
    </location>
    <ligand>
        <name>S-adenosyl-L-methionine</name>
        <dbReference type="ChEBI" id="CHEBI:59789"/>
    </ligand>
</feature>
<feature type="binding site" evidence="5 6">
    <location>
        <begin position="82"/>
        <end position="87"/>
    </location>
    <ligand>
        <name>S-adenosyl-L-methionine</name>
        <dbReference type="ChEBI" id="CHEBI:59789"/>
    </ligand>
</feature>
<feature type="binding site" evidence="5 6">
    <location>
        <begin position="108"/>
        <end position="111"/>
    </location>
    <ligand>
        <name>S-adenosyl-L-methionine</name>
        <dbReference type="ChEBI" id="CHEBI:59789"/>
    </ligand>
</feature>
<feature type="binding site" evidence="5 6">
    <location>
        <position position="128"/>
    </location>
    <ligand>
        <name>S-adenosyl-L-methionine</name>
        <dbReference type="ChEBI" id="CHEBI:59789"/>
    </ligand>
</feature>
<feature type="binding site" evidence="5 6">
    <location>
        <position position="229"/>
    </location>
    <ligand>
        <name>ATP</name>
        <dbReference type="ChEBI" id="CHEBI:30616"/>
    </ligand>
</feature>
<feature type="binding site" evidence="5">
    <location>
        <position position="237"/>
    </location>
    <ligand>
        <name>ATP</name>
        <dbReference type="ChEBI" id="CHEBI:30616"/>
    </ligand>
</feature>
<feature type="binding site" evidence="5 6">
    <location>
        <begin position="241"/>
        <end position="243"/>
    </location>
    <ligand>
        <name>ATP</name>
        <dbReference type="ChEBI" id="CHEBI:30616"/>
    </ligand>
</feature>
<feature type="binding site" evidence="5 6">
    <location>
        <position position="252"/>
    </location>
    <ligand>
        <name>ATP</name>
        <dbReference type="ChEBI" id="CHEBI:30616"/>
    </ligand>
</feature>
<feature type="binding site" evidence="5">
    <location>
        <position position="274"/>
    </location>
    <ligand>
        <name>ATP</name>
        <dbReference type="ChEBI" id="CHEBI:30616"/>
    </ligand>
</feature>
<feature type="binding site" evidence="5 6">
    <location>
        <begin position="309"/>
        <end position="311"/>
    </location>
    <ligand>
        <name>ATP</name>
        <dbReference type="ChEBI" id="CHEBI:30616"/>
    </ligand>
</feature>
<feature type="binding site" evidence="5">
    <location>
        <position position="358"/>
    </location>
    <ligand>
        <name>ATP</name>
        <dbReference type="ChEBI" id="CHEBI:30616"/>
    </ligand>
</feature>
<feature type="binding site" evidence="5 6">
    <location>
        <position position="369"/>
    </location>
    <ligand>
        <name>ATP</name>
        <dbReference type="ChEBI" id="CHEBI:30616"/>
    </ligand>
</feature>
<feature type="mutagenesis site" description="Loss of methyltransferase activity." evidence="5">
    <original>Y</original>
    <variation>F</variation>
    <location>
        <position position="16"/>
    </location>
</feature>
<feature type="mutagenesis site" description="90% decrease in methyltransferase activity; when associated with E-35 and E-197." evidence="5">
    <original>N</original>
    <variation>D</variation>
    <location>
        <position position="34"/>
    </location>
</feature>
<feature type="mutagenesis site" description="90% decrease in methyltransferase activity; when associated with D-34 and E-197." evidence="5">
    <original>Q</original>
    <variation>E</variation>
    <location>
        <position position="35"/>
    </location>
</feature>
<feature type="mutagenesis site" description="Loss of methyltransferase activity." evidence="5">
    <original>H</original>
    <variation>A</variation>
    <location>
        <position position="132"/>
    </location>
</feature>
<feature type="mutagenesis site" description="Loss of methyltransferase activity." evidence="5">
    <original>H</original>
    <variation>A</variation>
    <location>
        <position position="133"/>
    </location>
</feature>
<feature type="mutagenesis site" description="90% decrease in methyltransferase activity; when associated with D-34 and E-35." evidence="5">
    <original>H</original>
    <variation>E</variation>
    <location>
        <position position="197"/>
    </location>
</feature>
<feature type="mutagenesis site" description="Loss of methyltransferase activity." evidence="5">
    <original>R</original>
    <variation>A</variation>
    <location>
        <position position="203"/>
    </location>
</feature>
<feature type="mutagenesis site" description="Loss of kinase activity." evidence="5">
    <original>Y</original>
    <variation>F</variation>
    <location>
        <position position="230"/>
    </location>
</feature>
<feature type="mutagenesis site" description="Decrease in kinase activity." evidence="5">
    <original>R</original>
    <variation>A</variation>
    <location>
        <position position="270"/>
    </location>
</feature>
<feature type="mutagenesis site" description="Decrease in kinase activity." evidence="5">
    <original>E</original>
    <variation>A</variation>
    <location>
        <position position="274"/>
    </location>
</feature>
<feature type="mutagenesis site" description="10% decrease in kinase activity." evidence="5">
    <original>D</original>
    <variation>A</variation>
    <location>
        <position position="350"/>
    </location>
</feature>
<feature type="mutagenesis site" description="Loss of kinase activity." evidence="5">
    <original>D</original>
    <variation>A</variation>
    <variation>E</variation>
    <location>
        <position position="351"/>
    </location>
</feature>
<feature type="mutagenesis site" description="Decrease in kinase activity." evidence="5">
    <original>W</original>
    <variation>F</variation>
    <location>
        <position position="355"/>
    </location>
</feature>
<feature type="mutagenesis site" description="50% decrease in kinase activity." evidence="5">
    <original>W</original>
    <variation>H</variation>
    <location>
        <position position="355"/>
    </location>
</feature>
<feature type="helix" evidence="13">
    <location>
        <begin position="5"/>
        <end position="10"/>
    </location>
</feature>
<feature type="helix" evidence="13">
    <location>
        <begin position="23"/>
        <end position="28"/>
    </location>
</feature>
<feature type="helix" evidence="13">
    <location>
        <begin position="34"/>
        <end position="51"/>
    </location>
</feature>
<feature type="strand" evidence="13">
    <location>
        <begin position="56"/>
        <end position="61"/>
    </location>
</feature>
<feature type="helix" evidence="13">
    <location>
        <begin position="66"/>
        <end position="72"/>
    </location>
</feature>
<feature type="turn" evidence="13">
    <location>
        <begin position="73"/>
        <end position="75"/>
    </location>
</feature>
<feature type="strand" evidence="13">
    <location>
        <begin position="77"/>
        <end position="83"/>
    </location>
</feature>
<feature type="helix" evidence="13">
    <location>
        <begin position="85"/>
        <end position="96"/>
    </location>
</feature>
<feature type="strand" evidence="13">
    <location>
        <begin position="103"/>
        <end position="107"/>
    </location>
</feature>
<feature type="helix" evidence="13">
    <location>
        <begin position="110"/>
        <end position="116"/>
    </location>
</feature>
<feature type="strand" evidence="13">
    <location>
        <begin position="123"/>
        <end position="129"/>
    </location>
</feature>
<feature type="helix" evidence="13">
    <location>
        <begin position="131"/>
        <end position="138"/>
    </location>
</feature>
<feature type="helix" evidence="13">
    <location>
        <begin position="140"/>
        <end position="153"/>
    </location>
</feature>
<feature type="strand" evidence="13">
    <location>
        <begin position="154"/>
        <end position="160"/>
    </location>
</feature>
<feature type="strand" evidence="13">
    <location>
        <begin position="166"/>
        <end position="168"/>
    </location>
</feature>
<feature type="helix" evidence="13">
    <location>
        <begin position="169"/>
        <end position="173"/>
    </location>
</feature>
<feature type="helix" evidence="13">
    <location>
        <begin position="178"/>
        <end position="181"/>
    </location>
</feature>
<feature type="turn" evidence="13">
    <location>
        <begin position="182"/>
        <end position="184"/>
    </location>
</feature>
<feature type="strand" evidence="13">
    <location>
        <begin position="185"/>
        <end position="194"/>
    </location>
</feature>
<feature type="strand" evidence="13">
    <location>
        <begin position="197"/>
        <end position="200"/>
    </location>
</feature>
<feature type="strand" evidence="13">
    <location>
        <begin position="203"/>
        <end position="215"/>
    </location>
</feature>
<feature type="strand" evidence="13">
    <location>
        <begin position="218"/>
        <end position="221"/>
    </location>
</feature>
<feature type="strand" evidence="13">
    <location>
        <begin position="223"/>
        <end position="230"/>
    </location>
</feature>
<feature type="turn" evidence="13">
    <location>
        <begin position="234"/>
        <end position="239"/>
    </location>
</feature>
<feature type="strand" evidence="13">
    <location>
        <begin position="241"/>
        <end position="245"/>
    </location>
</feature>
<feature type="strand" evidence="13">
    <location>
        <begin position="247"/>
        <end position="257"/>
    </location>
</feature>
<feature type="helix" evidence="13">
    <location>
        <begin position="259"/>
        <end position="261"/>
    </location>
</feature>
<feature type="helix" evidence="13">
    <location>
        <begin position="265"/>
        <end position="283"/>
    </location>
</feature>
<feature type="strand" evidence="13">
    <location>
        <begin position="294"/>
        <end position="299"/>
    </location>
</feature>
<feature type="strand" evidence="13">
    <location>
        <begin position="301"/>
        <end position="309"/>
    </location>
</feature>
<feature type="strand" evidence="13">
    <location>
        <begin position="313"/>
        <end position="315"/>
    </location>
</feature>
<feature type="helix" evidence="13">
    <location>
        <begin position="316"/>
        <end position="321"/>
    </location>
</feature>
<feature type="helix" evidence="13">
    <location>
        <begin position="328"/>
        <end position="344"/>
    </location>
</feature>
<feature type="strand" evidence="13">
    <location>
        <begin position="348"/>
        <end position="350"/>
    </location>
</feature>
<feature type="helix" evidence="13">
    <location>
        <begin position="354"/>
        <end position="356"/>
    </location>
</feature>
<feature type="strand" evidence="13">
    <location>
        <begin position="357"/>
        <end position="359"/>
    </location>
</feature>
<feature type="strand" evidence="13">
    <location>
        <begin position="365"/>
        <end position="367"/>
    </location>
</feature>
<feature type="strand" evidence="13">
    <location>
        <begin position="373"/>
        <end position="375"/>
    </location>
</feature>
<feature type="helix" evidence="13">
    <location>
        <begin position="384"/>
        <end position="397"/>
    </location>
</feature>
<feature type="helix" evidence="13">
    <location>
        <begin position="422"/>
        <end position="430"/>
    </location>
</feature>
<feature type="helix" evidence="13">
    <location>
        <begin position="434"/>
        <end position="436"/>
    </location>
</feature>
<feature type="helix" evidence="13">
    <location>
        <begin position="439"/>
        <end position="447"/>
    </location>
</feature>
<feature type="helix" evidence="13">
    <location>
        <begin position="448"/>
        <end position="451"/>
    </location>
</feature>
<feature type="helix" evidence="13">
    <location>
        <begin position="455"/>
        <end position="457"/>
    </location>
</feature>
<feature type="helix" evidence="13">
    <location>
        <begin position="462"/>
        <end position="472"/>
    </location>
</feature>
<sequence length="708" mass="81732">MTKDLNTLVSELPEIYQTIFGHPEWDGDAARDCNQRLDLITEQYDNLSRALGRPLNVLDLGCAQGFFSLSLASKGATIVGIDFQQENINVCRALAEENPDFAAEFRVGRIEEVIAALEEGEFDLAIGLSVFHHIVHLHGIDEVKRLLSRLADVTQAVILELAVKEEPFYWGVSQPDDPRELIEQCAFYRLIGEFDTHLSPVPRPMYLVSNHRVLINDFNQPFQHWQNQPYAGAGLAHKRSRRYFFGEDYVCKFFYYDMPHGILTAEESQRNKYELHNEIKFLTQPPAGFDAPAVLAHGENAQSGWLVMEKLPGRLLSDMLAAGEEIDREKILGSLLRSLAALEKQGFWHDDVRPWNVMVDARQHARLIDFGSIVTTPQDCSWPTNLVQSFFVFVNELFAENKSWNGFWRSAPVHPFNLPQPWSNWLYAVWQEPVERWNFVLLLALFEKKAKLPSAEQQRGATEQWIIAQETVLLELQSRVRNESAGSEALRGQIHTLEQQMAQLQSAQDAFVEKAQQQVEVSHELTWLGENMEQLAALLQTAQAHAQADVQPELPPETAELLQRLEAANREIHHLSNENQQLRQEIEKIHRSRSWRMTKGYRYLGLQIHLLRQYGFVQRCKHFIKRVLRFVFSFMRKHPQVKHTAVNGLHKLGLYQPAYRLYRRMNPLPHSQYQADAQILSQTELQVMHPELLPPEVYEIYLKLTKNK</sequence>
<organism evidence="12">
    <name type="scientific">Escherichia coli</name>
    <dbReference type="NCBI Taxonomy" id="562"/>
    <lineage>
        <taxon>Bacteria</taxon>
        <taxon>Pseudomonadati</taxon>
        <taxon>Pseudomonadota</taxon>
        <taxon>Gammaproteobacteria</taxon>
        <taxon>Enterobacterales</taxon>
        <taxon>Enterobacteriaceae</taxon>
        <taxon>Escherichia</taxon>
    </lineage>
</organism>
<accession>J7I4B7</accession>
<name>WBDD_ECOLX</name>
<reference key="1">
    <citation type="journal article" date="2004" name="J. Biol. Chem.">
        <title>Nonreducing terminal modifications determine the chain length of polymannose O antigens of Escherichia coli and couple chain termination to polymer export via an ATP-binding cassette transporter.</title>
        <authorList>
            <person name="Clarke B.R."/>
            <person name="Cuthbertson L."/>
            <person name="Whitfield C."/>
        </authorList>
    </citation>
    <scope>NUCLEOTIDE SEQUENCE [GENOMIC DNA]</scope>
    <scope>FUNCTION</scope>
    <scope>PATHWAY</scope>
    <source>
        <strain>O9a:K30:H12 / E69</strain>
    </source>
</reference>
<reference key="2">
    <citation type="journal article" date="2009" name="J. Biol. Chem.">
        <title>Coordination of polymerization, chain termination, and export in assembly of the Escherichia coli lipopolysaccharide O9a antigen in an ATP-binding cassette transporter-dependent pathway.</title>
        <authorList>
            <person name="Clarke B.R."/>
            <person name="Greenfield L.K."/>
            <person name="Bouwman C."/>
            <person name="Whitfield C."/>
        </authorList>
    </citation>
    <scope>FUNCTION</scope>
    <scope>INTERACTION WITH WBDA</scope>
    <scope>SUBCELLULAR LOCATION</scope>
    <scope>DOMAIN</scope>
    <source>
        <strain>O9a:K30:H12 / E69</strain>
    </source>
</reference>
<reference key="3">
    <citation type="journal article" date="2011" name="J. Biol. Chem.">
        <title>In vitro reconstruction of the chain termination reaction in biosynthesis of the Escherichia coli O9a O-polysaccharide: the chain-length regulator, WbdD, catalyzes the addition of methyl phosphate to the non-reducing terminus of the growing glycan.</title>
        <authorList>
            <person name="Clarke B.R."/>
            <person name="Richards M.R."/>
            <person name="Greenfield L.K."/>
            <person name="Hou D."/>
            <person name="Lowary T.L."/>
            <person name="Whitfield C."/>
        </authorList>
    </citation>
    <scope>FUNCTION</scope>
    <scope>CATALYTIC ACTIVITY</scope>
    <scope>PATHWAY</scope>
    <source>
        <strain>O9a</strain>
    </source>
</reference>
<reference key="4">
    <citation type="journal article" date="2015" name="J. Biol. Chem.">
        <title>Domain interactions control complex formation and polymerase specificity in the biosynthesis of the Escherichia coli O9a antigen.</title>
        <authorList>
            <person name="Liston S.D."/>
            <person name="Clarke B.R."/>
            <person name="Greenfield L.K."/>
            <person name="Richards M.R."/>
            <person name="Lowary T.L."/>
            <person name="Whitfield C."/>
        </authorList>
    </citation>
    <scope>FUNCTION</scope>
    <scope>INTERACTION WITH WBDA</scope>
    <source>
        <strain>O9a:K-</strain>
    </source>
</reference>
<reference key="5">
    <citation type="journal article" date="2012" name="Acta Crystallogr. D">
        <title>Crystallization, dehydration and experimental phasing of WbdD, a bifunctional kinase and methyltransferase from Escherichia coli O9a.</title>
        <authorList>
            <person name="Hagelueken G."/>
            <person name="Huang H."/>
            <person name="Harlos K."/>
            <person name="Clarke B.R."/>
            <person name="Whitfield C."/>
            <person name="Naismith J.H."/>
        </authorList>
    </citation>
    <scope>X-RAY CRYSTALLOGRAPHY (3.00 ANGSTROMS) OF 2-556 IN COMPLEX WITH ADP AND S-ADENOSYL-L-METHIONINE</scope>
    <source>
        <strain>O9a</strain>
    </source>
</reference>
<reference key="6">
    <citation type="journal article" date="2012" name="Mol. Microbiol.">
        <title>Structure of WbdD: a bifunctional kinase and methyltransferase that regulates the chain length of the O antigen in Escherichia coli O9a.</title>
        <authorList>
            <person name="Hagelueken G."/>
            <person name="Huang H."/>
            <person name="Clarke B.R."/>
            <person name="Lebl T."/>
            <person name="Whitfield C."/>
            <person name="Naismith J.H."/>
        </authorList>
    </citation>
    <scope>X-RAY CRYSTALLOGRAPHY (2.15 ANGSTROMS) OF 2-556 IN COMPLEX WITH AMP; ATP AND S-ADENOSYL-L-METHIONINE</scope>
    <scope>SUBUNIT</scope>
    <scope>MUTAGENESIS OF TYR-16; ASN-34; GLN-35; HIS-132; HIS-133; HIS-197; ARG-203; TYR-230; ARG-270; GLU-274; ASP-350; ASP-351 AND TRP-355</scope>
    <source>
        <strain>O9a</strain>
    </source>
</reference>
<gene>
    <name evidence="8" type="primary">wbdD</name>
</gene>
<comment type="function">
    <text evidence="2 3 4 7">Regulates the length of the LPS O-antigen polysaccharide chain (PubMed:15184370, PubMed:19734145, PubMed:21990359). Stops the polymerization of the chain by phosphorylating and then methylating the phosphate on the terminal sugar (PubMed:15184370, PubMed:21990359). This terminal modification is essential for export of the O-antigen across the inner membrane (PubMed:15184370). WbdD is also required for correct localization of the WbdA mannosyltransferase (PubMed:19734145, PubMed:25422321).</text>
</comment>
<comment type="catalytic activity">
    <reaction evidence="4">
        <text>3-O-phospho-alpha-D-Man-(1-&gt;2)-alpha-D-Man-(1-&gt;2)-[alpha-D-Man-(1-&gt;3)-alpha-D-Man-(1-&gt;3)-alpha-D-Man-(1-&gt;2)-alpha-D-Man-(1-&gt;2)](n)-alpha-D-Man-(1-&gt;3)-alpha-D-Man-(1-&gt;3)-alpha-D-Man-(1-&gt;3)-alpha-D-GlcNAc-di-trans,octa-cis-undecaprenyl diphosphate + S-adenosyl-L-methionine = 3-O-methylphospho-alpha-D-Man-(1-&gt;2)-alpha-D-Man-(1-&gt;2)-[alpha-D-Man-(1-&gt;3)-alpha-D-Man-(1-&gt;3)-alpha-D-Man-(1-&gt;2)-alpha-D-Man-(1-&gt;2)](n)-alpha-D-Man-(1-&gt;3)-alpha-D-Man-(1-&gt;3)-alpha-D-Man-(1-&gt;3)-alpha-D-GlcNAc-di-trans,octa-cis-undecaprenyl diphosphate + S-adenosyl-L-homocysteine</text>
        <dbReference type="Rhea" id="RHEA:36639"/>
        <dbReference type="Rhea" id="RHEA-COMP:9559"/>
        <dbReference type="Rhea" id="RHEA-COMP:9560"/>
        <dbReference type="ChEBI" id="CHEBI:57856"/>
        <dbReference type="ChEBI" id="CHEBI:59789"/>
        <dbReference type="ChEBI" id="CHEBI:74008"/>
        <dbReference type="ChEBI" id="CHEBI:74009"/>
        <dbReference type="EC" id="2.1.1.294"/>
    </reaction>
</comment>
<comment type="catalytic activity">
    <reaction evidence="4">
        <text>alpha-D-Man-(1-&gt;2)-alpha-D-Man-(1-&gt;2)-[alpha-D-Man-(1-&gt;3)-alpha-D-Man-(1-&gt;3)-alpha-D-Man-(1-&gt;2)-alpha-D-Man-(1-&gt;2)](n)-alpha-D-Man-(1-&gt;3)-alpha-D-Man-(1-&gt;3)-alpha-D-Man-(1-&gt;3)-alpha-D-GlcNAc-di-trans,octa-cis-undecaprenyl diphosphate + ATP = 3-O-phospho-alpha-D-Man-(1-&gt;2)-alpha-D-Man-(1-&gt;2)-[alpha-D-Man-(1-&gt;3)-alpha-D-Man-(1-&gt;3)-alpha-D-Man-(1-&gt;2)-alpha-D-Man-(1-&gt;2)](n)-alpha-D-Man-(1-&gt;3)-alpha-D-Man-(1-&gt;3)-alpha-D-Man-(1-&gt;3)-alpha-D-GlcNAc-di-trans,octa-cis-undecaprenyl diphosphate + ADP + H(+)</text>
        <dbReference type="Rhea" id="RHEA:40371"/>
        <dbReference type="Rhea" id="RHEA-COMP:9558"/>
        <dbReference type="Rhea" id="RHEA-COMP:9559"/>
        <dbReference type="ChEBI" id="CHEBI:15378"/>
        <dbReference type="ChEBI" id="CHEBI:30616"/>
        <dbReference type="ChEBI" id="CHEBI:74008"/>
        <dbReference type="ChEBI" id="CHEBI:74010"/>
        <dbReference type="ChEBI" id="CHEBI:456216"/>
        <dbReference type="EC" id="2.7.1.181"/>
    </reaction>
</comment>
<comment type="pathway">
    <text evidence="2 4">Bacterial outer membrane biogenesis; LPS O-antigen biosynthesis.</text>
</comment>
<comment type="subunit">
    <text evidence="3 5 7">Homotrimer in solution (PubMed:22970759). Interacts with WbdA (PubMed:19734145, PubMed:25422321).</text>
</comment>
<comment type="subcellular location">
    <subcellularLocation>
        <location evidence="3">Cell inner membrane</location>
        <topology evidence="3">Peripheral membrane protein</topology>
        <orientation evidence="3">Cytoplasmic side</orientation>
    </subcellularLocation>
</comment>
<comment type="domain">
    <text evidence="3">The N-terminal part contains the methyltransferase and kinase domains that are essential for chain termination and polymer export (PubMed:19734145). The C-terminal region is required for targeting both WbdD and WbdA to the inner membrane (PubMed:19734145).</text>
</comment>
<comment type="similarity">
    <text evidence="11">Belongs to the WbdD family.</text>
</comment>
<protein>
    <recommendedName>
        <fullName evidence="11">O-antigen chain terminator bifunctional methyltransferase/kinase WbdD</fullName>
    </recommendedName>
    <domain>
        <recommendedName>
            <fullName evidence="11">3-O-phospho-polymannosyl GlcNAc-diphospho-ditrans,octacis-undecaprenol 3-phospho-methyltransferase</fullName>
            <ecNumber evidence="4">2.1.1.294</ecNumber>
        </recommendedName>
    </domain>
    <domain>
        <recommendedName>
            <fullName evidence="11">Polymannosyl GlcNAc-diphospho-ditrans,octacis-undecaprenol kinase</fullName>
            <ecNumber evidence="4">2.7.1.181</ecNumber>
        </recommendedName>
    </domain>
</protein>
<proteinExistence type="evidence at protein level"/>
<evidence type="ECO:0000255" key="1"/>
<evidence type="ECO:0000269" key="2">
    <source>
    </source>
</evidence>
<evidence type="ECO:0000269" key="3">
    <source>
    </source>
</evidence>
<evidence type="ECO:0000269" key="4">
    <source>
    </source>
</evidence>
<evidence type="ECO:0000269" key="5">
    <source>
    </source>
</evidence>
<evidence type="ECO:0000269" key="6">
    <source>
    </source>
</evidence>
<evidence type="ECO:0000269" key="7">
    <source>
    </source>
</evidence>
<evidence type="ECO:0000303" key="8">
    <source>
    </source>
</evidence>
<evidence type="ECO:0000303" key="9">
    <source>
    </source>
</evidence>
<evidence type="ECO:0000303" key="10">
    <source>
    </source>
</evidence>
<evidence type="ECO:0000305" key="11"/>
<evidence type="ECO:0000312" key="12">
    <source>
        <dbReference type="EMBL" id="AFQ31610.1"/>
    </source>
</evidence>
<evidence type="ECO:0007829" key="13">
    <source>
        <dbReference type="PDB" id="4AX8"/>
    </source>
</evidence>
<keyword id="KW-0002">3D-structure</keyword>
<keyword id="KW-0067">ATP-binding</keyword>
<keyword id="KW-0997">Cell inner membrane</keyword>
<keyword id="KW-1003">Cell membrane</keyword>
<keyword id="KW-0175">Coiled coil</keyword>
<keyword id="KW-0418">Kinase</keyword>
<keyword id="KW-0448">Lipopolysaccharide biosynthesis</keyword>
<keyword id="KW-0472">Membrane</keyword>
<keyword id="KW-0489">Methyltransferase</keyword>
<keyword id="KW-0547">Nucleotide-binding</keyword>
<keyword id="KW-0949">S-adenosyl-L-methionine</keyword>
<keyword id="KW-0808">Transferase</keyword>
<dbReference type="EC" id="2.1.1.294" evidence="4"/>
<dbReference type="EC" id="2.7.1.181" evidence="4"/>
<dbReference type="EMBL" id="JX235676">
    <property type="protein sequence ID" value="AFQ31610.1"/>
    <property type="molecule type" value="Genomic_DNA"/>
</dbReference>
<dbReference type="PDB" id="4AX8">
    <property type="method" value="X-ray"/>
    <property type="resolution" value="3.00 A"/>
    <property type="chains" value="A=2-556"/>
</dbReference>
<dbReference type="PDB" id="4AZS">
    <property type="method" value="X-ray"/>
    <property type="resolution" value="2.15 A"/>
    <property type="chains" value="A=2-556"/>
</dbReference>
<dbReference type="PDB" id="4AZT">
    <property type="method" value="X-ray"/>
    <property type="resolution" value="2.34 A"/>
    <property type="chains" value="A=2-556"/>
</dbReference>
<dbReference type="PDB" id="4AZV">
    <property type="method" value="X-ray"/>
    <property type="resolution" value="3.29 A"/>
    <property type="chains" value="A=2-556"/>
</dbReference>
<dbReference type="PDB" id="4AZW">
    <property type="method" value="X-ray"/>
    <property type="resolution" value="2.47 A"/>
    <property type="chains" value="A=2-458"/>
</dbReference>
<dbReference type="PDBsum" id="4AX8"/>
<dbReference type="PDBsum" id="4AZS"/>
<dbReference type="PDBsum" id="4AZT"/>
<dbReference type="PDBsum" id="4AZV"/>
<dbReference type="PDBsum" id="4AZW"/>
<dbReference type="SMR" id="J7I4B7"/>
<dbReference type="KEGG" id="ag:AFQ31610"/>
<dbReference type="BioCyc" id="MetaCyc:MONOMER-20266"/>
<dbReference type="BRENDA" id="2.1.1.294">
    <property type="organism ID" value="2026"/>
</dbReference>
<dbReference type="BRENDA" id="2.7.1.181">
    <property type="organism ID" value="2026"/>
</dbReference>
<dbReference type="UniPathway" id="UPA00281"/>
<dbReference type="EvolutionaryTrace" id="J7I4B7"/>
<dbReference type="GO" id="GO:0005886">
    <property type="term" value="C:plasma membrane"/>
    <property type="evidence" value="ECO:0007669"/>
    <property type="project" value="UniProtKB-SubCell"/>
</dbReference>
<dbReference type="GO" id="GO:0005524">
    <property type="term" value="F:ATP binding"/>
    <property type="evidence" value="ECO:0007669"/>
    <property type="project" value="UniProtKB-KW"/>
</dbReference>
<dbReference type="GO" id="GO:0008168">
    <property type="term" value="F:methyltransferase activity"/>
    <property type="evidence" value="ECO:0007669"/>
    <property type="project" value="UniProtKB-KW"/>
</dbReference>
<dbReference type="GO" id="GO:0004672">
    <property type="term" value="F:protein kinase activity"/>
    <property type="evidence" value="ECO:0007669"/>
    <property type="project" value="InterPro"/>
</dbReference>
<dbReference type="GO" id="GO:0032259">
    <property type="term" value="P:methylation"/>
    <property type="evidence" value="ECO:0007669"/>
    <property type="project" value="UniProtKB-KW"/>
</dbReference>
<dbReference type="GO" id="GO:0009243">
    <property type="term" value="P:O antigen biosynthetic process"/>
    <property type="evidence" value="ECO:0007669"/>
    <property type="project" value="UniProtKB-UniPathway"/>
</dbReference>
<dbReference type="CDD" id="cd02440">
    <property type="entry name" value="AdoMet_MTases"/>
    <property type="match status" value="1"/>
</dbReference>
<dbReference type="Gene3D" id="3.30.200.20">
    <property type="entry name" value="Phosphorylase Kinase, domain 1"/>
    <property type="match status" value="1"/>
</dbReference>
<dbReference type="Gene3D" id="1.10.510.10">
    <property type="entry name" value="Transferase(Phosphotransferase) domain 1"/>
    <property type="match status" value="1"/>
</dbReference>
<dbReference type="Gene3D" id="3.40.50.150">
    <property type="entry name" value="Vaccinia Virus protein VP39"/>
    <property type="match status" value="1"/>
</dbReference>
<dbReference type="InterPro" id="IPR011009">
    <property type="entry name" value="Kinase-like_dom_sf"/>
</dbReference>
<dbReference type="InterPro" id="IPR025714">
    <property type="entry name" value="Methyltranfer_dom"/>
</dbReference>
<dbReference type="InterPro" id="IPR000719">
    <property type="entry name" value="Prot_kinase_dom"/>
</dbReference>
<dbReference type="InterPro" id="IPR029063">
    <property type="entry name" value="SAM-dependent_MTases_sf"/>
</dbReference>
<dbReference type="PANTHER" id="PTHR43464">
    <property type="entry name" value="METHYLTRANSFERASE"/>
    <property type="match status" value="1"/>
</dbReference>
<dbReference type="PANTHER" id="PTHR43464:SF19">
    <property type="entry name" value="UBIQUINONE BIOSYNTHESIS O-METHYLTRANSFERASE, MITOCHONDRIAL"/>
    <property type="match status" value="1"/>
</dbReference>
<dbReference type="Pfam" id="PF13847">
    <property type="entry name" value="Methyltransf_31"/>
    <property type="match status" value="1"/>
</dbReference>
<dbReference type="Pfam" id="PF00069">
    <property type="entry name" value="Pkinase"/>
    <property type="match status" value="1"/>
</dbReference>
<dbReference type="SMART" id="SM00220">
    <property type="entry name" value="S_TKc"/>
    <property type="match status" value="1"/>
</dbReference>
<dbReference type="SUPFAM" id="SSF56112">
    <property type="entry name" value="Protein kinase-like (PK-like)"/>
    <property type="match status" value="1"/>
</dbReference>
<dbReference type="SUPFAM" id="SSF53335">
    <property type="entry name" value="S-adenosyl-L-methionine-dependent methyltransferases"/>
    <property type="match status" value="1"/>
</dbReference>